<gene>
    <name type="primary">Iars1</name>
    <name type="synonym">Iars</name>
</gene>
<keyword id="KW-0007">Acetylation</keyword>
<keyword id="KW-0030">Aminoacyl-tRNA synthetase</keyword>
<keyword id="KW-0067">ATP-binding</keyword>
<keyword id="KW-0963">Cytoplasm</keyword>
<keyword id="KW-0436">Ligase</keyword>
<keyword id="KW-0547">Nucleotide-binding</keyword>
<keyword id="KW-0597">Phosphoprotein</keyword>
<keyword id="KW-0648">Protein biosynthesis</keyword>
<keyword id="KW-1185">Reference proteome</keyword>
<organism>
    <name type="scientific">Mus musculus</name>
    <name type="common">Mouse</name>
    <dbReference type="NCBI Taxonomy" id="10090"/>
    <lineage>
        <taxon>Eukaryota</taxon>
        <taxon>Metazoa</taxon>
        <taxon>Chordata</taxon>
        <taxon>Craniata</taxon>
        <taxon>Vertebrata</taxon>
        <taxon>Euteleostomi</taxon>
        <taxon>Mammalia</taxon>
        <taxon>Eutheria</taxon>
        <taxon>Euarchontoglires</taxon>
        <taxon>Glires</taxon>
        <taxon>Rodentia</taxon>
        <taxon>Myomorpha</taxon>
        <taxon>Muroidea</taxon>
        <taxon>Muridae</taxon>
        <taxon>Murinae</taxon>
        <taxon>Mus</taxon>
        <taxon>Mus</taxon>
    </lineage>
</organism>
<evidence type="ECO:0000250" key="1"/>
<evidence type="ECO:0000250" key="2">
    <source>
        <dbReference type="UniProtKB" id="P41252"/>
    </source>
</evidence>
<evidence type="ECO:0000269" key="3">
    <source>
    </source>
</evidence>
<evidence type="ECO:0000305" key="4"/>
<reference key="1">
    <citation type="journal article" date="2005" name="Science">
        <title>The transcriptional landscape of the mammalian genome.</title>
        <authorList>
            <person name="Carninci P."/>
            <person name="Kasukawa T."/>
            <person name="Katayama S."/>
            <person name="Gough J."/>
            <person name="Frith M.C."/>
            <person name="Maeda N."/>
            <person name="Oyama R."/>
            <person name="Ravasi T."/>
            <person name="Lenhard B."/>
            <person name="Wells C."/>
            <person name="Kodzius R."/>
            <person name="Shimokawa K."/>
            <person name="Bajic V.B."/>
            <person name="Brenner S.E."/>
            <person name="Batalov S."/>
            <person name="Forrest A.R."/>
            <person name="Zavolan M."/>
            <person name="Davis M.J."/>
            <person name="Wilming L.G."/>
            <person name="Aidinis V."/>
            <person name="Allen J.E."/>
            <person name="Ambesi-Impiombato A."/>
            <person name="Apweiler R."/>
            <person name="Aturaliya R.N."/>
            <person name="Bailey T.L."/>
            <person name="Bansal M."/>
            <person name="Baxter L."/>
            <person name="Beisel K.W."/>
            <person name="Bersano T."/>
            <person name="Bono H."/>
            <person name="Chalk A.M."/>
            <person name="Chiu K.P."/>
            <person name="Choudhary V."/>
            <person name="Christoffels A."/>
            <person name="Clutterbuck D.R."/>
            <person name="Crowe M.L."/>
            <person name="Dalla E."/>
            <person name="Dalrymple B.P."/>
            <person name="de Bono B."/>
            <person name="Della Gatta G."/>
            <person name="di Bernardo D."/>
            <person name="Down T."/>
            <person name="Engstrom P."/>
            <person name="Fagiolini M."/>
            <person name="Faulkner G."/>
            <person name="Fletcher C.F."/>
            <person name="Fukushima T."/>
            <person name="Furuno M."/>
            <person name="Futaki S."/>
            <person name="Gariboldi M."/>
            <person name="Georgii-Hemming P."/>
            <person name="Gingeras T.R."/>
            <person name="Gojobori T."/>
            <person name="Green R.E."/>
            <person name="Gustincich S."/>
            <person name="Harbers M."/>
            <person name="Hayashi Y."/>
            <person name="Hensch T.K."/>
            <person name="Hirokawa N."/>
            <person name="Hill D."/>
            <person name="Huminiecki L."/>
            <person name="Iacono M."/>
            <person name="Ikeo K."/>
            <person name="Iwama A."/>
            <person name="Ishikawa T."/>
            <person name="Jakt M."/>
            <person name="Kanapin A."/>
            <person name="Katoh M."/>
            <person name="Kawasawa Y."/>
            <person name="Kelso J."/>
            <person name="Kitamura H."/>
            <person name="Kitano H."/>
            <person name="Kollias G."/>
            <person name="Krishnan S.P."/>
            <person name="Kruger A."/>
            <person name="Kummerfeld S.K."/>
            <person name="Kurochkin I.V."/>
            <person name="Lareau L.F."/>
            <person name="Lazarevic D."/>
            <person name="Lipovich L."/>
            <person name="Liu J."/>
            <person name="Liuni S."/>
            <person name="McWilliam S."/>
            <person name="Madan Babu M."/>
            <person name="Madera M."/>
            <person name="Marchionni L."/>
            <person name="Matsuda H."/>
            <person name="Matsuzawa S."/>
            <person name="Miki H."/>
            <person name="Mignone F."/>
            <person name="Miyake S."/>
            <person name="Morris K."/>
            <person name="Mottagui-Tabar S."/>
            <person name="Mulder N."/>
            <person name="Nakano N."/>
            <person name="Nakauchi H."/>
            <person name="Ng P."/>
            <person name="Nilsson R."/>
            <person name="Nishiguchi S."/>
            <person name="Nishikawa S."/>
            <person name="Nori F."/>
            <person name="Ohara O."/>
            <person name="Okazaki Y."/>
            <person name="Orlando V."/>
            <person name="Pang K.C."/>
            <person name="Pavan W.J."/>
            <person name="Pavesi G."/>
            <person name="Pesole G."/>
            <person name="Petrovsky N."/>
            <person name="Piazza S."/>
            <person name="Reed J."/>
            <person name="Reid J.F."/>
            <person name="Ring B.Z."/>
            <person name="Ringwald M."/>
            <person name="Rost B."/>
            <person name="Ruan Y."/>
            <person name="Salzberg S.L."/>
            <person name="Sandelin A."/>
            <person name="Schneider C."/>
            <person name="Schoenbach C."/>
            <person name="Sekiguchi K."/>
            <person name="Semple C.A."/>
            <person name="Seno S."/>
            <person name="Sessa L."/>
            <person name="Sheng Y."/>
            <person name="Shibata Y."/>
            <person name="Shimada H."/>
            <person name="Shimada K."/>
            <person name="Silva D."/>
            <person name="Sinclair B."/>
            <person name="Sperling S."/>
            <person name="Stupka E."/>
            <person name="Sugiura K."/>
            <person name="Sultana R."/>
            <person name="Takenaka Y."/>
            <person name="Taki K."/>
            <person name="Tammoja K."/>
            <person name="Tan S.L."/>
            <person name="Tang S."/>
            <person name="Taylor M.S."/>
            <person name="Tegner J."/>
            <person name="Teichmann S.A."/>
            <person name="Ueda H.R."/>
            <person name="van Nimwegen E."/>
            <person name="Verardo R."/>
            <person name="Wei C.L."/>
            <person name="Yagi K."/>
            <person name="Yamanishi H."/>
            <person name="Zabarovsky E."/>
            <person name="Zhu S."/>
            <person name="Zimmer A."/>
            <person name="Hide W."/>
            <person name="Bult C."/>
            <person name="Grimmond S.M."/>
            <person name="Teasdale R.D."/>
            <person name="Liu E.T."/>
            <person name="Brusic V."/>
            <person name="Quackenbush J."/>
            <person name="Wahlestedt C."/>
            <person name="Mattick J.S."/>
            <person name="Hume D.A."/>
            <person name="Kai C."/>
            <person name="Sasaki D."/>
            <person name="Tomaru Y."/>
            <person name="Fukuda S."/>
            <person name="Kanamori-Katayama M."/>
            <person name="Suzuki M."/>
            <person name="Aoki J."/>
            <person name="Arakawa T."/>
            <person name="Iida J."/>
            <person name="Imamura K."/>
            <person name="Itoh M."/>
            <person name="Kato T."/>
            <person name="Kawaji H."/>
            <person name="Kawagashira N."/>
            <person name="Kawashima T."/>
            <person name="Kojima M."/>
            <person name="Kondo S."/>
            <person name="Konno H."/>
            <person name="Nakano K."/>
            <person name="Ninomiya N."/>
            <person name="Nishio T."/>
            <person name="Okada M."/>
            <person name="Plessy C."/>
            <person name="Shibata K."/>
            <person name="Shiraki T."/>
            <person name="Suzuki S."/>
            <person name="Tagami M."/>
            <person name="Waki K."/>
            <person name="Watahiki A."/>
            <person name="Okamura-Oho Y."/>
            <person name="Suzuki H."/>
            <person name="Kawai J."/>
            <person name="Hayashizaki Y."/>
        </authorList>
    </citation>
    <scope>NUCLEOTIDE SEQUENCE [LARGE SCALE MRNA]</scope>
    <source>
        <strain>C57BL/6J</strain>
        <strain>NOD</strain>
        <tissue>Embryo</tissue>
        <tissue>Thymus</tissue>
    </source>
</reference>
<reference key="2">
    <citation type="submission" date="2005-07" db="EMBL/GenBank/DDBJ databases">
        <authorList>
            <person name="Mural R.J."/>
            <person name="Adams M.D."/>
            <person name="Myers E.W."/>
            <person name="Smith H.O."/>
            <person name="Venter J.C."/>
        </authorList>
    </citation>
    <scope>NUCLEOTIDE SEQUENCE [LARGE SCALE GENOMIC DNA]</scope>
</reference>
<reference key="3">
    <citation type="journal article" date="2004" name="Genome Res.">
        <title>The status, quality, and expansion of the NIH full-length cDNA project: the Mammalian Gene Collection (MGC).</title>
        <authorList>
            <consortium name="The MGC Project Team"/>
        </authorList>
    </citation>
    <scope>NUCLEOTIDE SEQUENCE [LARGE SCALE MRNA]</scope>
    <source>
        <strain>C57BL/6J</strain>
        <tissue>Brain</tissue>
    </source>
</reference>
<reference key="4">
    <citation type="journal article" date="2002" name="Proc. Natl. Acad. Sci. U.S.A.">
        <title>p38 is essential for the assembly and stability of macromolecular tRNA synthetase complex: implications for its physiological significance.</title>
        <authorList>
            <person name="Kim J.Y."/>
            <person name="Kang Y.-S."/>
            <person name="Lee J.-W."/>
            <person name="Kim H.J."/>
            <person name="Ahn Y.H."/>
            <person name="Park H."/>
            <person name="Ko Y.-G."/>
            <person name="Kim S."/>
        </authorList>
    </citation>
    <scope>SUBUNIT</scope>
    <scope>CATALYTIC ACTIVITY</scope>
    <scope>FUNCTION</scope>
</reference>
<reference key="5">
    <citation type="journal article" date="2010" name="Cell">
        <title>A tissue-specific atlas of mouse protein phosphorylation and expression.</title>
        <authorList>
            <person name="Huttlin E.L."/>
            <person name="Jedrychowski M.P."/>
            <person name="Elias J.E."/>
            <person name="Goswami T."/>
            <person name="Rad R."/>
            <person name="Beausoleil S.A."/>
            <person name="Villen J."/>
            <person name="Haas W."/>
            <person name="Sowa M.E."/>
            <person name="Gygi S.P."/>
        </authorList>
    </citation>
    <scope>IDENTIFICATION BY MASS SPECTROMETRY [LARGE SCALE ANALYSIS]</scope>
    <source>
        <tissue>Brain</tissue>
        <tissue>Brown adipose tissue</tissue>
        <tissue>Heart</tissue>
        <tissue>Kidney</tissue>
        <tissue>Liver</tissue>
        <tissue>Lung</tissue>
        <tissue>Pancreas</tissue>
        <tissue>Spleen</tissue>
        <tissue>Testis</tissue>
    </source>
</reference>
<comment type="function">
    <text evidence="3">Catalyzes the specific attachment of an amino acid to its cognate tRNA in a 2 step reaction: the amino acid (AA) is first activated by ATP to form AA-AMP and then transferred to the acceptor end of the tRNA.</text>
</comment>
<comment type="catalytic activity">
    <reaction evidence="3">
        <text>tRNA(Ile) + L-isoleucine + ATP = L-isoleucyl-tRNA(Ile) + AMP + diphosphate</text>
        <dbReference type="Rhea" id="RHEA:11060"/>
        <dbReference type="Rhea" id="RHEA-COMP:9666"/>
        <dbReference type="Rhea" id="RHEA-COMP:9695"/>
        <dbReference type="ChEBI" id="CHEBI:30616"/>
        <dbReference type="ChEBI" id="CHEBI:33019"/>
        <dbReference type="ChEBI" id="CHEBI:58045"/>
        <dbReference type="ChEBI" id="CHEBI:78442"/>
        <dbReference type="ChEBI" id="CHEBI:78528"/>
        <dbReference type="ChEBI" id="CHEBI:456215"/>
        <dbReference type="EC" id="6.1.1.5"/>
    </reaction>
</comment>
<comment type="subunit">
    <text evidence="3">Part of a multisubunit complex that groups tRNA ligases for Arg (RARS1), Asp (DARS1), Gln (QARS1), Ile (IARS1), Leu (LARS1), Lys (KARS1), Met (MARS1) the bifunctional ligase for Glu and Pro (EPRS1) and the auxiliary subunits AIMP1/p43, AIMP2/p38 and EEF1E1/p18.</text>
</comment>
<comment type="subcellular location">
    <subcellularLocation>
        <location evidence="2">Cytoplasm</location>
    </subcellularLocation>
    <subcellularLocation>
        <location evidence="2">Cytoplasm</location>
        <location evidence="2">Cytosol</location>
    </subcellularLocation>
</comment>
<comment type="similarity">
    <text evidence="4">Belongs to the class-I aminoacyl-tRNA synthetase family.</text>
</comment>
<name>SYIC_MOUSE</name>
<dbReference type="EC" id="6.1.1.5" evidence="3"/>
<dbReference type="EMBL" id="AK087992">
    <property type="protein sequence ID" value="BAC40081.1"/>
    <property type="molecule type" value="mRNA"/>
</dbReference>
<dbReference type="EMBL" id="AK133856">
    <property type="protein sequence ID" value="BAE21890.1"/>
    <property type="molecule type" value="mRNA"/>
</dbReference>
<dbReference type="EMBL" id="CH466546">
    <property type="protein sequence ID" value="EDL41088.1"/>
    <property type="molecule type" value="Genomic_DNA"/>
</dbReference>
<dbReference type="EMBL" id="BC067029">
    <property type="protein sequence ID" value="AAH67029.1"/>
    <property type="molecule type" value="mRNA"/>
</dbReference>
<dbReference type="CCDS" id="CCDS36659.1"/>
<dbReference type="RefSeq" id="NP_742012.2">
    <property type="nucleotide sequence ID" value="NM_172015.3"/>
</dbReference>
<dbReference type="RefSeq" id="XP_006516889.1">
    <property type="nucleotide sequence ID" value="XM_006516826.3"/>
</dbReference>
<dbReference type="SMR" id="Q8BU30"/>
<dbReference type="BioGRID" id="222774">
    <property type="interactions" value="12"/>
</dbReference>
<dbReference type="FunCoup" id="Q8BU30">
    <property type="interactions" value="3487"/>
</dbReference>
<dbReference type="IntAct" id="Q8BU30">
    <property type="interactions" value="2"/>
</dbReference>
<dbReference type="MINT" id="Q8BU30"/>
<dbReference type="STRING" id="10090.ENSMUSP00000132082"/>
<dbReference type="GlyGen" id="Q8BU30">
    <property type="glycosylation" value="2 sites, 1 N-linked glycan (1 site), 1 O-linked glycan (1 site)"/>
</dbReference>
<dbReference type="iPTMnet" id="Q8BU30"/>
<dbReference type="PhosphoSitePlus" id="Q8BU30"/>
<dbReference type="SwissPalm" id="Q8BU30"/>
<dbReference type="jPOST" id="Q8BU30"/>
<dbReference type="PaxDb" id="10090-ENSMUSP00000132082"/>
<dbReference type="PeptideAtlas" id="Q8BU30"/>
<dbReference type="ProteomicsDB" id="253436"/>
<dbReference type="Pumba" id="Q8BU30"/>
<dbReference type="Antibodypedia" id="28131">
    <property type="antibodies" value="142 antibodies from 22 providers"/>
</dbReference>
<dbReference type="DNASU" id="105148"/>
<dbReference type="Ensembl" id="ENSMUST00000164260.8">
    <property type="protein sequence ID" value="ENSMUSP00000126806.2"/>
    <property type="gene ID" value="ENSMUSG00000037851.15"/>
</dbReference>
<dbReference type="Ensembl" id="ENSMUST00000165316.8">
    <property type="protein sequence ID" value="ENSMUSP00000132082.2"/>
    <property type="gene ID" value="ENSMUSG00000037851.15"/>
</dbReference>
<dbReference type="GeneID" id="105148"/>
<dbReference type="KEGG" id="mmu:105148"/>
<dbReference type="UCSC" id="uc007qjv.2">
    <property type="organism name" value="mouse"/>
</dbReference>
<dbReference type="AGR" id="MGI:2145219"/>
<dbReference type="CTD" id="3376"/>
<dbReference type="MGI" id="MGI:2145219">
    <property type="gene designation" value="Iars1"/>
</dbReference>
<dbReference type="VEuPathDB" id="HostDB:ENSMUSG00000037851"/>
<dbReference type="eggNOG" id="KOG0434">
    <property type="taxonomic scope" value="Eukaryota"/>
</dbReference>
<dbReference type="GeneTree" id="ENSGT00550000074921"/>
<dbReference type="HOGENOM" id="CLU_001493_1_1_1"/>
<dbReference type="InParanoid" id="Q8BU30"/>
<dbReference type="OMA" id="EIIVIHK"/>
<dbReference type="OrthoDB" id="1706657at2759"/>
<dbReference type="PhylomeDB" id="Q8BU30"/>
<dbReference type="Reactome" id="R-MMU-9856649">
    <property type="pathway name" value="Transcriptional and post-translational regulation of MITF-M expression and activity"/>
</dbReference>
<dbReference type="BioGRID-ORCS" id="105148">
    <property type="hits" value="27 hits in 80 CRISPR screens"/>
</dbReference>
<dbReference type="ChiTaRS" id="Iars">
    <property type="organism name" value="mouse"/>
</dbReference>
<dbReference type="PRO" id="PR:Q8BU30"/>
<dbReference type="Proteomes" id="UP000000589">
    <property type="component" value="Chromosome 13"/>
</dbReference>
<dbReference type="RNAct" id="Q8BU30">
    <property type="molecule type" value="protein"/>
</dbReference>
<dbReference type="Bgee" id="ENSMUSG00000037851">
    <property type="expression patterns" value="Expressed in primary oocyte and 284 other cell types or tissues"/>
</dbReference>
<dbReference type="ExpressionAtlas" id="Q8BU30">
    <property type="expression patterns" value="baseline and differential"/>
</dbReference>
<dbReference type="GO" id="GO:0017101">
    <property type="term" value="C:aminoacyl-tRNA synthetase multienzyme complex"/>
    <property type="evidence" value="ECO:0000314"/>
    <property type="project" value="CAFA"/>
</dbReference>
<dbReference type="GO" id="GO:0005737">
    <property type="term" value="C:cytoplasm"/>
    <property type="evidence" value="ECO:0000266"/>
    <property type="project" value="MGI"/>
</dbReference>
<dbReference type="GO" id="GO:0005829">
    <property type="term" value="C:cytosol"/>
    <property type="evidence" value="ECO:0000250"/>
    <property type="project" value="UniProtKB"/>
</dbReference>
<dbReference type="GO" id="GO:0005654">
    <property type="term" value="C:nucleoplasm"/>
    <property type="evidence" value="ECO:0007669"/>
    <property type="project" value="Ensembl"/>
</dbReference>
<dbReference type="GO" id="GO:0002161">
    <property type="term" value="F:aminoacyl-tRNA deacylase activity"/>
    <property type="evidence" value="ECO:0007669"/>
    <property type="project" value="InterPro"/>
</dbReference>
<dbReference type="GO" id="GO:0005524">
    <property type="term" value="F:ATP binding"/>
    <property type="evidence" value="ECO:0007669"/>
    <property type="project" value="UniProtKB-KW"/>
</dbReference>
<dbReference type="GO" id="GO:0051020">
    <property type="term" value="F:GTPase binding"/>
    <property type="evidence" value="ECO:0007669"/>
    <property type="project" value="Ensembl"/>
</dbReference>
<dbReference type="GO" id="GO:0004822">
    <property type="term" value="F:isoleucine-tRNA ligase activity"/>
    <property type="evidence" value="ECO:0000315"/>
    <property type="project" value="CAFA"/>
</dbReference>
<dbReference type="GO" id="GO:0000049">
    <property type="term" value="F:tRNA binding"/>
    <property type="evidence" value="ECO:0007669"/>
    <property type="project" value="InterPro"/>
</dbReference>
<dbReference type="GO" id="GO:0006428">
    <property type="term" value="P:isoleucyl-tRNA aminoacylation"/>
    <property type="evidence" value="ECO:0000314"/>
    <property type="project" value="CAFA"/>
</dbReference>
<dbReference type="CDD" id="cd07961">
    <property type="entry name" value="Anticodon_Ia_Ile_ABEc"/>
    <property type="match status" value="1"/>
</dbReference>
<dbReference type="CDD" id="cd00818">
    <property type="entry name" value="IleRS_core"/>
    <property type="match status" value="1"/>
</dbReference>
<dbReference type="FunFam" id="3.90.740.10:FF:000056">
    <property type="entry name" value="Isoleucine--tRNA ligase, cytoplasmic"/>
    <property type="match status" value="1"/>
</dbReference>
<dbReference type="FunFam" id="3.40.50.620:FF:000414">
    <property type="entry name" value="Isoleucine--tRNA ligase, cytoplasmic-like"/>
    <property type="match status" value="1"/>
</dbReference>
<dbReference type="FunFam" id="1.10.730.10:FF:000004">
    <property type="entry name" value="Isoleucyl-tRNA synthetase, cytoplasmic"/>
    <property type="match status" value="1"/>
</dbReference>
<dbReference type="FunFam" id="3.40.50.620:FF:000050">
    <property type="entry name" value="Isoleucyl-tRNA synthetase,cytoplasmic"/>
    <property type="match status" value="1"/>
</dbReference>
<dbReference type="Gene3D" id="3.40.50.620">
    <property type="entry name" value="HUPs"/>
    <property type="match status" value="2"/>
</dbReference>
<dbReference type="Gene3D" id="1.10.730.10">
    <property type="entry name" value="Isoleucyl-tRNA Synthetase, Domain 1"/>
    <property type="match status" value="1"/>
</dbReference>
<dbReference type="HAMAP" id="MF_02003">
    <property type="entry name" value="Ile_tRNA_synth_type2"/>
    <property type="match status" value="1"/>
</dbReference>
<dbReference type="InterPro" id="IPR001412">
    <property type="entry name" value="aa-tRNA-synth_I_CS"/>
</dbReference>
<dbReference type="InterPro" id="IPR002300">
    <property type="entry name" value="aa-tRNA-synth_Ia"/>
</dbReference>
<dbReference type="InterPro" id="IPR033709">
    <property type="entry name" value="Anticodon_Ile_ABEc"/>
</dbReference>
<dbReference type="InterPro" id="IPR002301">
    <property type="entry name" value="Ile-tRNA-ligase"/>
</dbReference>
<dbReference type="InterPro" id="IPR023586">
    <property type="entry name" value="Ile-tRNA-ligase_type2"/>
</dbReference>
<dbReference type="InterPro" id="IPR013155">
    <property type="entry name" value="M/V/L/I-tRNA-synth_anticd-bd"/>
</dbReference>
<dbReference type="InterPro" id="IPR014729">
    <property type="entry name" value="Rossmann-like_a/b/a_fold"/>
</dbReference>
<dbReference type="InterPro" id="IPR009080">
    <property type="entry name" value="tRNAsynth_Ia_anticodon-bd"/>
</dbReference>
<dbReference type="InterPro" id="IPR057033">
    <property type="entry name" value="Ubiquitin_IARS1"/>
</dbReference>
<dbReference type="InterPro" id="IPR009008">
    <property type="entry name" value="Val/Leu/Ile-tRNA-synth_edit"/>
</dbReference>
<dbReference type="NCBIfam" id="TIGR00392">
    <property type="entry name" value="ileS"/>
    <property type="match status" value="1"/>
</dbReference>
<dbReference type="PANTHER" id="PTHR42780:SF1">
    <property type="entry name" value="ISOLEUCINE--TRNA LIGASE, CYTOPLASMIC"/>
    <property type="match status" value="1"/>
</dbReference>
<dbReference type="PANTHER" id="PTHR42780">
    <property type="entry name" value="SOLEUCYL-TRNA SYNTHETASE"/>
    <property type="match status" value="1"/>
</dbReference>
<dbReference type="Pfam" id="PF08264">
    <property type="entry name" value="Anticodon_1"/>
    <property type="match status" value="1"/>
</dbReference>
<dbReference type="Pfam" id="PF19302">
    <property type="entry name" value="DUF5915"/>
    <property type="match status" value="1"/>
</dbReference>
<dbReference type="Pfam" id="PF00133">
    <property type="entry name" value="tRNA-synt_1"/>
    <property type="match status" value="1"/>
</dbReference>
<dbReference type="Pfam" id="PF23567">
    <property type="entry name" value="Ubiquitin_IARS1"/>
    <property type="match status" value="2"/>
</dbReference>
<dbReference type="PRINTS" id="PR00984">
    <property type="entry name" value="TRNASYNTHILE"/>
</dbReference>
<dbReference type="SUPFAM" id="SSF47323">
    <property type="entry name" value="Anticodon-binding domain of a subclass of class I aminoacyl-tRNA synthetases"/>
    <property type="match status" value="1"/>
</dbReference>
<dbReference type="SUPFAM" id="SSF52374">
    <property type="entry name" value="Nucleotidylyl transferase"/>
    <property type="match status" value="1"/>
</dbReference>
<dbReference type="SUPFAM" id="SSF50677">
    <property type="entry name" value="ValRS/IleRS/LeuRS editing domain"/>
    <property type="match status" value="1"/>
</dbReference>
<dbReference type="PROSITE" id="PS00178">
    <property type="entry name" value="AA_TRNA_LIGASE_I"/>
    <property type="match status" value="1"/>
</dbReference>
<feature type="chain" id="PRO_0000098598" description="Isoleucine--tRNA ligase, cytoplasmic">
    <location>
        <begin position="1"/>
        <end position="1262"/>
    </location>
</feature>
<feature type="short sequence motif" description="'HIGH' region">
    <location>
        <begin position="48"/>
        <end position="58"/>
    </location>
</feature>
<feature type="short sequence motif" description="'KMSKS' region">
    <location>
        <begin position="600"/>
        <end position="604"/>
    </location>
</feature>
<feature type="binding site" evidence="1">
    <location>
        <position position="603"/>
    </location>
    <ligand>
        <name>ATP</name>
        <dbReference type="ChEBI" id="CHEBI:30616"/>
    </ligand>
</feature>
<feature type="modified residue" description="N-acetylmethionine" evidence="2">
    <location>
        <position position="1"/>
    </location>
</feature>
<feature type="modified residue" description="Phosphoserine" evidence="2">
    <location>
        <position position="1049"/>
    </location>
</feature>
<feature type="modified residue" description="Phosphothreonine" evidence="2">
    <location>
        <position position="1058"/>
    </location>
</feature>
<feature type="sequence conflict" description="In Ref. 1; BAC40081." evidence="4" ref="1">
    <original>I</original>
    <variation>V</variation>
    <location>
        <position position="1033"/>
    </location>
</feature>
<proteinExistence type="evidence at protein level"/>
<accession>Q8BU30</accession>
<accession>Q6NXK4</accession>
<protein>
    <recommendedName>
        <fullName>Isoleucine--tRNA ligase, cytoplasmic</fullName>
        <ecNumber evidence="3">6.1.1.5</ecNumber>
    </recommendedName>
    <alternativeName>
        <fullName>Isoleucyl-tRNA synthetase</fullName>
        <shortName>IRS</shortName>
        <shortName>IleRS</shortName>
    </alternativeName>
</protein>
<sequence length="1262" mass="144271">MVQQVPENISFPAEEEKILEFWSKHNCFQECLKQSKLRPKFTFYDGPPFATGLPHYGHILAGTIKDIVTRYAHQSGFHVDRRFGWDCHGLPVEYEIDKTLGIKGPEDVAKMGIAEYNKQCRAIVMRYSAEWKSTVTRLGRWIDFDNDYKTLYPQFMESVWWVFKQLYDKGLVYRGVKVMPFSTACGTPLSNFESNQNYKDVQDPSVFVTFPLEEDENTSLVAWTTTPWTLPSNLALCVNPEIQYVKIKDVARGKLFILTEARLSALYKQESDYEILERFPGASLKGKKYKPLFDYFIKCKENGAFTVLVDHYVKDEEGTGVVHQAPYFGADDHRVCMDFNIIQKDSVPVCPVDASGCFTEEVTHFVGQYVKDADKNIIRMLKEQGRLLAAGTFTHSYPFCWRSDTPLIYKSVPSWFVRVEPMVDQLLKNNDLCYWVPEFVREKRFGNWLKEARDWAISRNRYWGTPIPLWVSEDLEEVVCIGSVAELEELSGTKISDLHRESIDHLTIPSRCGKAPLRRVSEVFDCWFESGSMPYAQVHYPFESKREFEDAFPADFIAEGIDQTRGWFYTLLVLATALFGQPPFKNVIVNGLILASDGQKMSKRKKNYPDPVSIIDKYGADALRLYLINSPVVRAENLRFKEEGVRDVLKDVLLPWYNAYRFFIQNVFRLHKEEEVKFLYNEHTVRESPNITDRWVLSFMQSLLGFFETEMAAYRLYTVVPRLVKFVDILTNWYVRMNRRRLKGESGVEDCVMALETLFSVLLSLCRLMAPYTPFLTELMYQNLKLLIDPASLRDKDTLSIHYLMLPRVREELIDKKTENAVSRMQSVIELGRVIRDRKTIPIKYPLKEIVVIHQDPEALEDIRSLEKYIIEELNVRKVTLSTDKNKYGIRLRAEPDHMVLGKRLKGAFKAVMMAIKRLSNEELERFQKSGSIVVEGHELHEEDIRLMYTFDQATGGTAQFEAHSDAQALVLLDVTPDQSMVDEGMAREVINRIQKLRKKCNLVPTDEITVYYNAKSEGRYLNNVIESHTDFIFATIKAPLKPYPVPTSDNILIQEQTQLKGSELEITLTKGSCVPGPACAYVNLNICANGTEQGGVLLLENPKGDNQLNLVKLKTVVTSVFGVKNAKLSVFHGETEIQNQTDLLSLSGRTLCVTAGASPSPISSPSTLLCQYLNLQLLNAEPQECLTGTVGTLLLENPLGQNGLTHQGLVHEAAKVFGLRSRRLRLFLNETQTQEITEDIPMKTLNMKTVYVSVLPTTADG</sequence>